<proteinExistence type="inferred from homology"/>
<name>ACDH_LEPCP</name>
<accession>B1Y2E6</accession>
<gene>
    <name type="ordered locus">Lcho_3341</name>
</gene>
<evidence type="ECO:0000255" key="1">
    <source>
        <dbReference type="HAMAP-Rule" id="MF_01657"/>
    </source>
</evidence>
<organism>
    <name type="scientific">Leptothrix cholodnii (strain ATCC 51168 / LMG 8142 / SP-6)</name>
    <name type="common">Leptothrix discophora (strain SP-6)</name>
    <dbReference type="NCBI Taxonomy" id="395495"/>
    <lineage>
        <taxon>Bacteria</taxon>
        <taxon>Pseudomonadati</taxon>
        <taxon>Pseudomonadota</taxon>
        <taxon>Betaproteobacteria</taxon>
        <taxon>Burkholderiales</taxon>
        <taxon>Sphaerotilaceae</taxon>
        <taxon>Leptothrix</taxon>
    </lineage>
</organism>
<sequence length="305" mass="32175">MKKIKCALIGPGNIGTDLLAKLQRSAVLEPVWMVGIDPESDGLKRAREMGIKTTSDGVDGLIPHMKADGVQIVFDATSAYVHAENSRKVNEQGALMIDLTPAAIGPFCVPPVNLKAHVGSGEMNVNMVTCGGQATIPMVAAVSRVQPVAYGEIVATVSSRSVGPGTRKNIDEFTRTTAGAVEKVGGARKGKAIIVINPAEPPLMMRDTVHCLTETEPDQAAITASVHAMLAEVQKYVPGYRLVNGPVFDGNRVSVFLEVEGLGDYLPKYAGNLDIMTAAAARTAEMFAEEILKGELVLQPTAVAA</sequence>
<reference key="1">
    <citation type="submission" date="2008-03" db="EMBL/GenBank/DDBJ databases">
        <title>Complete sequence of Leptothrix cholodnii SP-6.</title>
        <authorList>
            <consortium name="US DOE Joint Genome Institute"/>
            <person name="Copeland A."/>
            <person name="Lucas S."/>
            <person name="Lapidus A."/>
            <person name="Glavina del Rio T."/>
            <person name="Dalin E."/>
            <person name="Tice H."/>
            <person name="Bruce D."/>
            <person name="Goodwin L."/>
            <person name="Pitluck S."/>
            <person name="Chertkov O."/>
            <person name="Brettin T."/>
            <person name="Detter J.C."/>
            <person name="Han C."/>
            <person name="Kuske C.R."/>
            <person name="Schmutz J."/>
            <person name="Larimer F."/>
            <person name="Land M."/>
            <person name="Hauser L."/>
            <person name="Kyrpides N."/>
            <person name="Lykidis A."/>
            <person name="Emerson D."/>
            <person name="Richardson P."/>
        </authorList>
    </citation>
    <scope>NUCLEOTIDE SEQUENCE [LARGE SCALE GENOMIC DNA]</scope>
    <source>
        <strain>ATCC 51168 / LMG 8142 / SP-6</strain>
    </source>
</reference>
<comment type="catalytic activity">
    <reaction evidence="1">
        <text>acetaldehyde + NAD(+) + CoA = acetyl-CoA + NADH + H(+)</text>
        <dbReference type="Rhea" id="RHEA:23288"/>
        <dbReference type="ChEBI" id="CHEBI:15343"/>
        <dbReference type="ChEBI" id="CHEBI:15378"/>
        <dbReference type="ChEBI" id="CHEBI:57287"/>
        <dbReference type="ChEBI" id="CHEBI:57288"/>
        <dbReference type="ChEBI" id="CHEBI:57540"/>
        <dbReference type="ChEBI" id="CHEBI:57945"/>
        <dbReference type="EC" id="1.2.1.10"/>
    </reaction>
</comment>
<comment type="similarity">
    <text evidence="1">Belongs to the acetaldehyde dehydrogenase family.</text>
</comment>
<dbReference type="EC" id="1.2.1.10" evidence="1"/>
<dbReference type="EMBL" id="CP001013">
    <property type="protein sequence ID" value="ACB35599.1"/>
    <property type="molecule type" value="Genomic_DNA"/>
</dbReference>
<dbReference type="RefSeq" id="WP_012348346.1">
    <property type="nucleotide sequence ID" value="NC_010524.1"/>
</dbReference>
<dbReference type="SMR" id="B1Y2E6"/>
<dbReference type="STRING" id="395495.Lcho_3341"/>
<dbReference type="KEGG" id="lch:Lcho_3341"/>
<dbReference type="eggNOG" id="COG4569">
    <property type="taxonomic scope" value="Bacteria"/>
</dbReference>
<dbReference type="HOGENOM" id="CLU_062208_0_0_4"/>
<dbReference type="OrthoDB" id="9786743at2"/>
<dbReference type="Proteomes" id="UP000001693">
    <property type="component" value="Chromosome"/>
</dbReference>
<dbReference type="GO" id="GO:0008774">
    <property type="term" value="F:acetaldehyde dehydrogenase (acetylating) activity"/>
    <property type="evidence" value="ECO:0007669"/>
    <property type="project" value="UniProtKB-UniRule"/>
</dbReference>
<dbReference type="GO" id="GO:0051287">
    <property type="term" value="F:NAD binding"/>
    <property type="evidence" value="ECO:0007669"/>
    <property type="project" value="UniProtKB-UniRule"/>
</dbReference>
<dbReference type="GO" id="GO:0009056">
    <property type="term" value="P:catabolic process"/>
    <property type="evidence" value="ECO:0007669"/>
    <property type="project" value="UniProtKB-KW"/>
</dbReference>
<dbReference type="CDD" id="cd23933">
    <property type="entry name" value="ALDH_C"/>
    <property type="match status" value="1"/>
</dbReference>
<dbReference type="Gene3D" id="3.30.360.10">
    <property type="entry name" value="Dihydrodipicolinate Reductase, domain 2"/>
    <property type="match status" value="1"/>
</dbReference>
<dbReference type="Gene3D" id="3.40.50.720">
    <property type="entry name" value="NAD(P)-binding Rossmann-like Domain"/>
    <property type="match status" value="1"/>
</dbReference>
<dbReference type="HAMAP" id="MF_01657">
    <property type="entry name" value="Ac_ald_DH_ac"/>
    <property type="match status" value="1"/>
</dbReference>
<dbReference type="InterPro" id="IPR003361">
    <property type="entry name" value="Acetaldehyde_dehydrogenase"/>
</dbReference>
<dbReference type="InterPro" id="IPR015426">
    <property type="entry name" value="Acetylaldehyde_DH_C"/>
</dbReference>
<dbReference type="InterPro" id="IPR036291">
    <property type="entry name" value="NAD(P)-bd_dom_sf"/>
</dbReference>
<dbReference type="InterPro" id="IPR000534">
    <property type="entry name" value="Semialdehyde_DH_NAD-bd"/>
</dbReference>
<dbReference type="NCBIfam" id="TIGR03215">
    <property type="entry name" value="ac_ald_DH_ac"/>
    <property type="match status" value="1"/>
</dbReference>
<dbReference type="NCBIfam" id="NF006157">
    <property type="entry name" value="PRK08300.1"/>
    <property type="match status" value="1"/>
</dbReference>
<dbReference type="Pfam" id="PF09290">
    <property type="entry name" value="AcetDehyd-dimer"/>
    <property type="match status" value="1"/>
</dbReference>
<dbReference type="PIRSF" id="PIRSF015689">
    <property type="entry name" value="Actaldh_dh_actl"/>
    <property type="match status" value="1"/>
</dbReference>
<dbReference type="SMART" id="SM00859">
    <property type="entry name" value="Semialdhyde_dh"/>
    <property type="match status" value="1"/>
</dbReference>
<dbReference type="SUPFAM" id="SSF55347">
    <property type="entry name" value="Glyceraldehyde-3-phosphate dehydrogenase-like, C-terminal domain"/>
    <property type="match status" value="1"/>
</dbReference>
<dbReference type="SUPFAM" id="SSF51735">
    <property type="entry name" value="NAD(P)-binding Rossmann-fold domains"/>
    <property type="match status" value="1"/>
</dbReference>
<protein>
    <recommendedName>
        <fullName evidence="1">Acetaldehyde dehydrogenase</fullName>
        <ecNumber evidence="1">1.2.1.10</ecNumber>
    </recommendedName>
    <alternativeName>
        <fullName evidence="1">Acetaldehyde dehydrogenase [acetylating]</fullName>
    </alternativeName>
</protein>
<keyword id="KW-0058">Aromatic hydrocarbons catabolism</keyword>
<keyword id="KW-0520">NAD</keyword>
<keyword id="KW-0560">Oxidoreductase</keyword>
<keyword id="KW-1185">Reference proteome</keyword>
<feature type="chain" id="PRO_0000387664" description="Acetaldehyde dehydrogenase">
    <location>
        <begin position="1"/>
        <end position="305"/>
    </location>
</feature>
<feature type="active site" description="Acyl-thioester intermediate" evidence="1">
    <location>
        <position position="130"/>
    </location>
</feature>
<feature type="binding site" evidence="1">
    <location>
        <begin position="161"/>
        <end position="169"/>
    </location>
    <ligand>
        <name>NAD(+)</name>
        <dbReference type="ChEBI" id="CHEBI:57540"/>
    </ligand>
</feature>
<feature type="binding site" evidence="1">
    <location>
        <position position="272"/>
    </location>
    <ligand>
        <name>NAD(+)</name>
        <dbReference type="ChEBI" id="CHEBI:57540"/>
    </ligand>
</feature>